<dbReference type="EC" id="4.3.2.1" evidence="1"/>
<dbReference type="EMBL" id="AP007255">
    <property type="protein sequence ID" value="BAE53293.1"/>
    <property type="molecule type" value="Genomic_DNA"/>
</dbReference>
<dbReference type="RefSeq" id="WP_011386833.1">
    <property type="nucleotide sequence ID" value="NC_007626.1"/>
</dbReference>
<dbReference type="SMR" id="Q2VYN2"/>
<dbReference type="STRING" id="342108.amb4489"/>
<dbReference type="KEGG" id="mag:amb4489"/>
<dbReference type="HOGENOM" id="CLU_027272_2_3_5"/>
<dbReference type="OrthoDB" id="9769623at2"/>
<dbReference type="UniPathway" id="UPA00068">
    <property type="reaction ID" value="UER00114"/>
</dbReference>
<dbReference type="Proteomes" id="UP000007058">
    <property type="component" value="Chromosome"/>
</dbReference>
<dbReference type="GO" id="GO:0005829">
    <property type="term" value="C:cytosol"/>
    <property type="evidence" value="ECO:0007669"/>
    <property type="project" value="TreeGrafter"/>
</dbReference>
<dbReference type="GO" id="GO:0004056">
    <property type="term" value="F:argininosuccinate lyase activity"/>
    <property type="evidence" value="ECO:0007669"/>
    <property type="project" value="UniProtKB-UniRule"/>
</dbReference>
<dbReference type="GO" id="GO:0042450">
    <property type="term" value="P:arginine biosynthetic process via ornithine"/>
    <property type="evidence" value="ECO:0007669"/>
    <property type="project" value="InterPro"/>
</dbReference>
<dbReference type="GO" id="GO:0006526">
    <property type="term" value="P:L-arginine biosynthetic process"/>
    <property type="evidence" value="ECO:0007669"/>
    <property type="project" value="UniProtKB-UniRule"/>
</dbReference>
<dbReference type="CDD" id="cd01359">
    <property type="entry name" value="Argininosuccinate_lyase"/>
    <property type="match status" value="1"/>
</dbReference>
<dbReference type="FunFam" id="1.10.275.10:FF:000002">
    <property type="entry name" value="Argininosuccinate lyase"/>
    <property type="match status" value="1"/>
</dbReference>
<dbReference type="FunFam" id="1.10.40.30:FF:000001">
    <property type="entry name" value="Argininosuccinate lyase"/>
    <property type="match status" value="1"/>
</dbReference>
<dbReference type="FunFam" id="1.20.200.10:FF:000015">
    <property type="entry name" value="argininosuccinate lyase isoform X2"/>
    <property type="match status" value="1"/>
</dbReference>
<dbReference type="Gene3D" id="1.10.40.30">
    <property type="entry name" value="Fumarase/aspartase (C-terminal domain)"/>
    <property type="match status" value="1"/>
</dbReference>
<dbReference type="Gene3D" id="1.20.200.10">
    <property type="entry name" value="Fumarase/aspartase (Central domain)"/>
    <property type="match status" value="1"/>
</dbReference>
<dbReference type="Gene3D" id="1.10.275.10">
    <property type="entry name" value="Fumarase/aspartase (N-terminal domain)"/>
    <property type="match status" value="1"/>
</dbReference>
<dbReference type="HAMAP" id="MF_00006">
    <property type="entry name" value="Arg_succ_lyase"/>
    <property type="match status" value="1"/>
</dbReference>
<dbReference type="InterPro" id="IPR029419">
    <property type="entry name" value="Arg_succ_lyase_C"/>
</dbReference>
<dbReference type="InterPro" id="IPR009049">
    <property type="entry name" value="Argininosuccinate_lyase"/>
</dbReference>
<dbReference type="InterPro" id="IPR024083">
    <property type="entry name" value="Fumarase/histidase_N"/>
</dbReference>
<dbReference type="InterPro" id="IPR020557">
    <property type="entry name" value="Fumarate_lyase_CS"/>
</dbReference>
<dbReference type="InterPro" id="IPR000362">
    <property type="entry name" value="Fumarate_lyase_fam"/>
</dbReference>
<dbReference type="InterPro" id="IPR022761">
    <property type="entry name" value="Fumarate_lyase_N"/>
</dbReference>
<dbReference type="InterPro" id="IPR008948">
    <property type="entry name" value="L-Aspartase-like"/>
</dbReference>
<dbReference type="NCBIfam" id="TIGR00838">
    <property type="entry name" value="argH"/>
    <property type="match status" value="1"/>
</dbReference>
<dbReference type="PANTHER" id="PTHR43814">
    <property type="entry name" value="ARGININOSUCCINATE LYASE"/>
    <property type="match status" value="1"/>
</dbReference>
<dbReference type="PANTHER" id="PTHR43814:SF1">
    <property type="entry name" value="ARGININOSUCCINATE LYASE"/>
    <property type="match status" value="1"/>
</dbReference>
<dbReference type="Pfam" id="PF14698">
    <property type="entry name" value="ASL_C2"/>
    <property type="match status" value="1"/>
</dbReference>
<dbReference type="Pfam" id="PF00206">
    <property type="entry name" value="Lyase_1"/>
    <property type="match status" value="1"/>
</dbReference>
<dbReference type="PRINTS" id="PR00145">
    <property type="entry name" value="ARGSUCLYASE"/>
</dbReference>
<dbReference type="PRINTS" id="PR00149">
    <property type="entry name" value="FUMRATELYASE"/>
</dbReference>
<dbReference type="SUPFAM" id="SSF48557">
    <property type="entry name" value="L-aspartase-like"/>
    <property type="match status" value="1"/>
</dbReference>
<dbReference type="PROSITE" id="PS00163">
    <property type="entry name" value="FUMARATE_LYASES"/>
    <property type="match status" value="1"/>
</dbReference>
<name>ARLY_PARM1</name>
<comment type="catalytic activity">
    <reaction evidence="1">
        <text>2-(N(omega)-L-arginino)succinate = fumarate + L-arginine</text>
        <dbReference type="Rhea" id="RHEA:24020"/>
        <dbReference type="ChEBI" id="CHEBI:29806"/>
        <dbReference type="ChEBI" id="CHEBI:32682"/>
        <dbReference type="ChEBI" id="CHEBI:57472"/>
        <dbReference type="EC" id="4.3.2.1"/>
    </reaction>
</comment>
<comment type="pathway">
    <text evidence="1">Amino-acid biosynthesis; L-arginine biosynthesis; L-arginine from L-ornithine and carbamoyl phosphate: step 3/3.</text>
</comment>
<comment type="subcellular location">
    <subcellularLocation>
        <location evidence="1">Cytoplasm</location>
    </subcellularLocation>
</comment>
<comment type="similarity">
    <text evidence="1">Belongs to the lyase 1 family. Argininosuccinate lyase subfamily.</text>
</comment>
<proteinExistence type="inferred from homology"/>
<feature type="chain" id="PRO_0000240739" description="Argininosuccinate lyase">
    <location>
        <begin position="1"/>
        <end position="471"/>
    </location>
</feature>
<protein>
    <recommendedName>
        <fullName evidence="1">Argininosuccinate lyase</fullName>
        <shortName evidence="1">ASAL</shortName>
        <ecNumber evidence="1">4.3.2.1</ecNumber>
    </recommendedName>
    <alternativeName>
        <fullName evidence="1">Arginosuccinase</fullName>
    </alternativeName>
</protein>
<reference key="1">
    <citation type="journal article" date="2005" name="DNA Res.">
        <title>Complete genome sequence of the facultative anaerobic magnetotactic bacterium Magnetospirillum sp. strain AMB-1.</title>
        <authorList>
            <person name="Matsunaga T."/>
            <person name="Okamura Y."/>
            <person name="Fukuda Y."/>
            <person name="Wahyudi A.T."/>
            <person name="Murase Y."/>
            <person name="Takeyama H."/>
        </authorList>
    </citation>
    <scope>NUCLEOTIDE SEQUENCE [LARGE SCALE GENOMIC DNA]</scope>
    <source>
        <strain>ATCC 700264 / AMB-1</strain>
    </source>
</reference>
<evidence type="ECO:0000255" key="1">
    <source>
        <dbReference type="HAMAP-Rule" id="MF_00006"/>
    </source>
</evidence>
<accession>Q2VYN2</accession>
<gene>
    <name evidence="1" type="primary">argH</name>
    <name type="ordered locus">amb4489</name>
</gene>
<keyword id="KW-0028">Amino-acid biosynthesis</keyword>
<keyword id="KW-0055">Arginine biosynthesis</keyword>
<keyword id="KW-0963">Cytoplasm</keyword>
<keyword id="KW-0456">Lyase</keyword>
<organism>
    <name type="scientific">Paramagnetospirillum magneticum (strain ATCC 700264 / AMB-1)</name>
    <name type="common">Magnetospirillum magneticum</name>
    <dbReference type="NCBI Taxonomy" id="342108"/>
    <lineage>
        <taxon>Bacteria</taxon>
        <taxon>Pseudomonadati</taxon>
        <taxon>Pseudomonadota</taxon>
        <taxon>Alphaproteobacteria</taxon>
        <taxon>Rhodospirillales</taxon>
        <taxon>Magnetospirillaceae</taxon>
        <taxon>Paramagnetospirillum</taxon>
    </lineage>
</organism>
<sequence length="471" mass="51174">MTDTDKTKAASSMWGGRFAGGPAAIMQRINASIDFDKRLYAQDIRGSKAHCRMLVKQQILTEADGALILDGLDKVLAEIEAGNFPFSHALEDIHMNVESRLAELIGEAAGRLHTARSRNDQVATDFRLWVRDAVDGMESALKELVTALLDRAEEHAATVMPGFTHLQTAQPVTFGHHMMAYVEMISRDRSRLADARRRLNECPLGSAALAGTSFPIDREATARDLGFAGPMRNSLDGVSDRDFALEFMSASAICAVHLSRLAEELVIWTSSQFRFVTLSDAFTTGSSIMPQKRNPDAAELIRAKTGRVIGDLNALLIVMKGLPLAYSKDMQDDKEPVFEVADTMELAIAAMTGMVRDMTVNVDILRAAAGAGFTTATDIADWCVRALKMPFRRAHHVAGSLVKLAEGKNCGLEDLTLAEMQAIEPGITEEARSVLSVESSVNSRTSLGGTAPVRVREAVAGARRRLMDEAP</sequence>